<organism>
    <name type="scientific">Saccharomyces cerevisiae (strain YJM789)</name>
    <name type="common">Baker's yeast</name>
    <dbReference type="NCBI Taxonomy" id="307796"/>
    <lineage>
        <taxon>Eukaryota</taxon>
        <taxon>Fungi</taxon>
        <taxon>Dikarya</taxon>
        <taxon>Ascomycota</taxon>
        <taxon>Saccharomycotina</taxon>
        <taxon>Saccharomycetes</taxon>
        <taxon>Saccharomycetales</taxon>
        <taxon>Saccharomycetaceae</taxon>
        <taxon>Saccharomyces</taxon>
    </lineage>
</organism>
<dbReference type="EMBL" id="AAFW02000151">
    <property type="protein sequence ID" value="EDN60065.1"/>
    <property type="molecule type" value="Genomic_DNA"/>
</dbReference>
<dbReference type="SMR" id="A6ZZL7"/>
<dbReference type="HOGENOM" id="CLU_061887_0_2_1"/>
<dbReference type="Proteomes" id="UP000007060">
    <property type="component" value="Unassembled WGS sequence"/>
</dbReference>
<dbReference type="GO" id="GO:0005730">
    <property type="term" value="C:nucleolus"/>
    <property type="evidence" value="ECO:0007669"/>
    <property type="project" value="UniProtKB-SubCell"/>
</dbReference>
<dbReference type="GO" id="GO:0032040">
    <property type="term" value="C:small-subunit processome"/>
    <property type="evidence" value="ECO:0007669"/>
    <property type="project" value="InterPro"/>
</dbReference>
<dbReference type="GO" id="GO:0006364">
    <property type="term" value="P:rRNA processing"/>
    <property type="evidence" value="ECO:0007669"/>
    <property type="project" value="UniProtKB-KW"/>
</dbReference>
<dbReference type="InterPro" id="IPR007144">
    <property type="entry name" value="SSU_processome_Utp11"/>
</dbReference>
<dbReference type="PANTHER" id="PTHR12838">
    <property type="entry name" value="U3 SMALL NUCLEOLAR RNA-ASSOCIATED PROTEIN 11"/>
    <property type="match status" value="1"/>
</dbReference>
<dbReference type="PANTHER" id="PTHR12838:SF0">
    <property type="entry name" value="U3 SMALL NUCLEOLAR RNA-ASSOCIATED PROTEIN 11-RELATED"/>
    <property type="match status" value="1"/>
</dbReference>
<dbReference type="Pfam" id="PF03998">
    <property type="entry name" value="Utp11"/>
    <property type="match status" value="1"/>
</dbReference>
<dbReference type="PIRSF" id="PIRSF015952">
    <property type="entry name" value="U3snoRNP11"/>
    <property type="match status" value="1"/>
</dbReference>
<proteinExistence type="inferred from homology"/>
<protein>
    <recommendedName>
        <fullName>U3 small nucleolar RNA-associated protein 11</fullName>
        <shortName>U3 snoRNA-associated protein 11</shortName>
    </recommendedName>
    <alternativeName>
        <fullName>U three protein 11</fullName>
    </alternativeName>
</protein>
<comment type="function">
    <text evidence="1">Involved in nucleolar processing of pre-18S ribosomal RNA.</text>
</comment>
<comment type="subunit">
    <text evidence="1">Component of the ribosomal small subunit (SSU) processome composed of at least 40 protein subunits and snoRNA U3. Interacts with snoRNA U3. Interacts with EBP2, FAF1, MPP10, RPS16A and RRP14 (By similarity).</text>
</comment>
<comment type="subcellular location">
    <subcellularLocation>
        <location evidence="1">Nucleus</location>
        <location evidence="1">Nucleolus</location>
    </subcellularLocation>
</comment>
<comment type="similarity">
    <text evidence="3">Belongs to the UTP11 family.</text>
</comment>
<reference key="1">
    <citation type="journal article" date="2007" name="Proc. Natl. Acad. Sci. U.S.A.">
        <title>Genome sequencing and comparative analysis of Saccharomyces cerevisiae strain YJM789.</title>
        <authorList>
            <person name="Wei W."/>
            <person name="McCusker J.H."/>
            <person name="Hyman R.W."/>
            <person name="Jones T."/>
            <person name="Ning Y."/>
            <person name="Cao Z."/>
            <person name="Gu Z."/>
            <person name="Bruno D."/>
            <person name="Miranda M."/>
            <person name="Nguyen M."/>
            <person name="Wilhelmy J."/>
            <person name="Komp C."/>
            <person name="Tamse R."/>
            <person name="Wang X."/>
            <person name="Jia P."/>
            <person name="Luedi P."/>
            <person name="Oefner P.J."/>
            <person name="David L."/>
            <person name="Dietrich F.S."/>
            <person name="Li Y."/>
            <person name="Davis R.W."/>
            <person name="Steinmetz L.M."/>
        </authorList>
    </citation>
    <scope>NUCLEOTIDE SEQUENCE [LARGE SCALE GENOMIC DNA]</scope>
    <source>
        <strain>YJM789</strain>
    </source>
</reference>
<feature type="chain" id="PRO_0000377655" description="U3 small nucleolar RNA-associated protein 11">
    <location>
        <begin position="1"/>
        <end position="250"/>
    </location>
</feature>
<feature type="region of interest" description="Disordered" evidence="2">
    <location>
        <begin position="1"/>
        <end position="23"/>
    </location>
</feature>
<feature type="region of interest" description="Disordered" evidence="2">
    <location>
        <begin position="219"/>
        <end position="250"/>
    </location>
</feature>
<feature type="compositionally biased region" description="Basic and acidic residues" evidence="2">
    <location>
        <begin position="1"/>
        <end position="10"/>
    </location>
</feature>
<keyword id="KW-0539">Nucleus</keyword>
<keyword id="KW-0687">Ribonucleoprotein</keyword>
<keyword id="KW-0690">Ribosome biogenesis</keyword>
<keyword id="KW-0698">rRNA processing</keyword>
<name>UTP11_YEAS7</name>
<sequence length="250" mass="29735">MAKLVHDVQKKQHRERSQLTSRSRYGFLEKHKDYVKRAQDFHRKQSTLKVLREKAKERNPDEYYHAMHSRKTDAKGLLISSRHGDEEDESLSMDQVKLLKTQDSNYVRTLRQIELKKLEKGAKQLMFKSSGNHTIFVDSREKMNEFTPEKFFNTTSEMVNRSENRLTKDQLAQDISNNRNASSIMPKESLDKKKLKKFKQVKQHLQRETQLKQVQQRMDAQRELLKKGSKKKIVDSSGKISFKWKKQRKR</sequence>
<evidence type="ECO:0000250" key="1"/>
<evidence type="ECO:0000256" key="2">
    <source>
        <dbReference type="SAM" id="MobiDB-lite"/>
    </source>
</evidence>
<evidence type="ECO:0000305" key="3"/>
<accession>A6ZZL7</accession>
<gene>
    <name type="primary">UTP11</name>
    <name type="ORF">SCY_3277</name>
</gene>